<protein>
    <recommendedName>
        <fullName>Protein jagged-2</fullName>
        <shortName>Jagged2</shortName>
    </recommendedName>
</protein>
<name>JAG2_RAT</name>
<organism>
    <name type="scientific">Rattus norvegicus</name>
    <name type="common">Rat</name>
    <dbReference type="NCBI Taxonomy" id="10116"/>
    <lineage>
        <taxon>Eukaryota</taxon>
        <taxon>Metazoa</taxon>
        <taxon>Chordata</taxon>
        <taxon>Craniata</taxon>
        <taxon>Vertebrata</taxon>
        <taxon>Euteleostomi</taxon>
        <taxon>Mammalia</taxon>
        <taxon>Eutheria</taxon>
        <taxon>Euarchontoglires</taxon>
        <taxon>Glires</taxon>
        <taxon>Rodentia</taxon>
        <taxon>Myomorpha</taxon>
        <taxon>Muroidea</taxon>
        <taxon>Muridae</taxon>
        <taxon>Murinae</taxon>
        <taxon>Rattus</taxon>
    </lineage>
</organism>
<comment type="function">
    <text>Putative Notch ligand involved in the mediation of Notch signaling. May have a role in neurogenesis in the peripheral nervous system, limb development and in the adult brain.</text>
</comment>
<comment type="subcellular location">
    <subcellularLocation>
        <location>Membrane</location>
        <topology>Single-pass type I membrane protein</topology>
    </subcellularLocation>
</comment>
<comment type="developmental stage">
    <text>At 12.5 dpc it is detected in dorsal root ganglia, AER, and surface ectoderm. At 14.5 dpc, found as well in cranial ganglia, thymus and olfactory epithelia. At 16.5 dpc, found as well in salivary gland, tooth buds and hair follicles.</text>
</comment>
<keyword id="KW-0106">Calcium</keyword>
<keyword id="KW-0217">Developmental protein</keyword>
<keyword id="KW-1015">Disulfide bond</keyword>
<keyword id="KW-0245">EGF-like domain</keyword>
<keyword id="KW-0325">Glycoprotein</keyword>
<keyword id="KW-0472">Membrane</keyword>
<keyword id="KW-0914">Notch signaling pathway</keyword>
<keyword id="KW-0597">Phosphoprotein</keyword>
<keyword id="KW-1185">Reference proteome</keyword>
<keyword id="KW-0677">Repeat</keyword>
<keyword id="KW-0812">Transmembrane</keyword>
<keyword id="KW-1133">Transmembrane helix</keyword>
<feature type="chain" id="PRO_0000055632" description="Protein jagged-2">
    <location>
        <begin position="1" status="less than"/>
        <end position="1202"/>
    </location>
</feature>
<feature type="topological domain" description="Extracellular" evidence="3">
    <location>
        <begin position="1" status="less than"/>
        <end position="1037"/>
    </location>
</feature>
<feature type="transmembrane region" description="Helical" evidence="3">
    <location>
        <begin position="1038"/>
        <end position="1058"/>
    </location>
</feature>
<feature type="topological domain" description="Cytoplasmic" evidence="3">
    <location>
        <begin position="1059"/>
        <end position="1202"/>
    </location>
</feature>
<feature type="domain" description="DSL" evidence="5">
    <location>
        <begin position="150"/>
        <end position="194"/>
    </location>
</feature>
<feature type="domain" description="EGF-like 1" evidence="4">
    <location>
        <begin position="195"/>
        <end position="228"/>
    </location>
</feature>
<feature type="domain" description="EGF-like 2; atypical" evidence="4">
    <location>
        <begin position="229"/>
        <end position="259"/>
    </location>
</feature>
<feature type="domain" description="EGF-like 3" evidence="4">
    <location>
        <begin position="261"/>
        <end position="299"/>
    </location>
</feature>
<feature type="domain" description="EGF-like 4" evidence="4">
    <location>
        <begin position="301"/>
        <end position="337"/>
    </location>
</feature>
<feature type="domain" description="EGF-like 5; calcium-binding" evidence="4">
    <location>
        <begin position="339"/>
        <end position="375"/>
    </location>
</feature>
<feature type="domain" description="EGF-like 6; calcium-binding" evidence="4">
    <location>
        <begin position="377"/>
        <end position="413"/>
    </location>
</feature>
<feature type="domain" description="EGF-like 7; calcium-binding" evidence="4">
    <location>
        <begin position="415"/>
        <end position="450"/>
    </location>
</feature>
<feature type="domain" description="EGF-like 8" evidence="4">
    <location>
        <begin position="452"/>
        <end position="488"/>
    </location>
</feature>
<feature type="domain" description="EGF-like 9" evidence="4">
    <location>
        <begin position="490"/>
        <end position="527"/>
    </location>
</feature>
<feature type="domain" description="EGF-like 10; atypical" evidence="4">
    <location>
        <begin position="529"/>
        <end position="589"/>
    </location>
</feature>
<feature type="domain" description="EGF-like 11; calcium-binding" evidence="4">
    <location>
        <begin position="591"/>
        <end position="627"/>
    </location>
</feature>
<feature type="domain" description="EGF-like 12; calcium-binding" evidence="4">
    <location>
        <begin position="629"/>
        <end position="665"/>
    </location>
</feature>
<feature type="domain" description="EGF-like 13" evidence="4">
    <location>
        <begin position="667"/>
        <end position="703"/>
    </location>
</feature>
<feature type="domain" description="EGF-like 14" evidence="4">
    <location>
        <begin position="706"/>
        <end position="742"/>
    </location>
</feature>
<feature type="domain" description="EGF-like 15; calcium-binding" evidence="4">
    <location>
        <begin position="744"/>
        <end position="780"/>
    </location>
</feature>
<feature type="domain" description="EGF-like 16; calcium-binding" evidence="4">
    <location>
        <begin position="782"/>
        <end position="818"/>
    </location>
</feature>
<feature type="region of interest" description="Disordered" evidence="6">
    <location>
        <begin position="1070"/>
        <end position="1202"/>
    </location>
</feature>
<feature type="compositionally biased region" description="Basic and acidic residues" evidence="6">
    <location>
        <begin position="1070"/>
        <end position="1080"/>
    </location>
</feature>
<feature type="compositionally biased region" description="Basic and acidic residues" evidence="6">
    <location>
        <begin position="1147"/>
        <end position="1159"/>
    </location>
</feature>
<feature type="compositionally biased region" description="Basic and acidic residues" evidence="6">
    <location>
        <begin position="1185"/>
        <end position="1202"/>
    </location>
</feature>
<feature type="modified residue" description="Phosphoserine" evidence="2">
    <location>
        <position position="1080"/>
    </location>
</feature>
<feature type="glycosylation site" description="N-linked (GlcNAc...) asparagine" evidence="3">
    <location>
        <position position="107"/>
    </location>
</feature>
<feature type="glycosylation site" description="N-linked (GlcNAc...) asparagine" evidence="3">
    <location>
        <position position="525"/>
    </location>
</feature>
<feature type="glycosylation site" description="N-linked (GlcNAc...) asparagine" evidence="3">
    <location>
        <position position="574"/>
    </location>
</feature>
<feature type="glycosylation site" description="N-linked (GlcNAc...) asparagine" evidence="3">
    <location>
        <position position="707"/>
    </location>
</feature>
<feature type="glycosylation site" description="N-linked (GlcNAc...) asparagine" evidence="3">
    <location>
        <position position="1015"/>
    </location>
</feature>
<feature type="disulfide bond" evidence="1">
    <location>
        <begin position="152"/>
        <end position="161"/>
    </location>
</feature>
<feature type="disulfide bond" evidence="1">
    <location>
        <begin position="165"/>
        <end position="177"/>
    </location>
</feature>
<feature type="disulfide bond" evidence="1">
    <location>
        <begin position="185"/>
        <end position="194"/>
    </location>
</feature>
<feature type="disulfide bond" evidence="1">
    <location>
        <begin position="199"/>
        <end position="210"/>
    </location>
</feature>
<feature type="disulfide bond" evidence="1">
    <location>
        <begin position="203"/>
        <end position="216"/>
    </location>
</feature>
<feature type="disulfide bond" evidence="1">
    <location>
        <begin position="218"/>
        <end position="227"/>
    </location>
</feature>
<feature type="disulfide bond" evidence="1">
    <location>
        <begin position="230"/>
        <end position="241"/>
    </location>
</feature>
<feature type="disulfide bond" evidence="1">
    <location>
        <begin position="236"/>
        <end position="247"/>
    </location>
</feature>
<feature type="disulfide bond" evidence="1">
    <location>
        <begin position="249"/>
        <end position="258"/>
    </location>
</feature>
<feature type="disulfide bond" evidence="1">
    <location>
        <begin position="265"/>
        <end position="277"/>
    </location>
</feature>
<feature type="disulfide bond" evidence="1">
    <location>
        <begin position="271"/>
        <end position="287"/>
    </location>
</feature>
<feature type="disulfide bond" evidence="1">
    <location>
        <begin position="289"/>
        <end position="298"/>
    </location>
</feature>
<feature type="disulfide bond" evidence="1">
    <location>
        <begin position="305"/>
        <end position="316"/>
    </location>
</feature>
<feature type="disulfide bond" evidence="1">
    <location>
        <begin position="310"/>
        <end position="325"/>
    </location>
</feature>
<feature type="disulfide bond" evidence="1">
    <location>
        <begin position="327"/>
        <end position="336"/>
    </location>
</feature>
<feature type="disulfide bond" evidence="1">
    <location>
        <begin position="343"/>
        <end position="354"/>
    </location>
</feature>
<feature type="disulfide bond" evidence="1">
    <location>
        <begin position="348"/>
        <end position="363"/>
    </location>
</feature>
<feature type="disulfide bond" evidence="1">
    <location>
        <begin position="365"/>
        <end position="374"/>
    </location>
</feature>
<feature type="disulfide bond" evidence="1">
    <location>
        <begin position="381"/>
        <end position="392"/>
    </location>
</feature>
<feature type="disulfide bond" evidence="1">
    <location>
        <begin position="386"/>
        <end position="401"/>
    </location>
</feature>
<feature type="disulfide bond" evidence="1">
    <location>
        <begin position="403"/>
        <end position="412"/>
    </location>
</feature>
<feature type="disulfide bond" evidence="1">
    <location>
        <begin position="419"/>
        <end position="429"/>
    </location>
</feature>
<feature type="disulfide bond" evidence="1">
    <location>
        <begin position="423"/>
        <end position="438"/>
    </location>
</feature>
<feature type="disulfide bond" evidence="1">
    <location>
        <begin position="440"/>
        <end position="449"/>
    </location>
</feature>
<feature type="disulfide bond" evidence="1">
    <location>
        <begin position="456"/>
        <end position="467"/>
    </location>
</feature>
<feature type="disulfide bond" evidence="1">
    <location>
        <begin position="461"/>
        <end position="476"/>
    </location>
</feature>
<feature type="disulfide bond" evidence="1">
    <location>
        <begin position="478"/>
        <end position="487"/>
    </location>
</feature>
<feature type="disulfide bond" evidence="1">
    <location>
        <begin position="495"/>
        <end position="506"/>
    </location>
</feature>
<feature type="disulfide bond" evidence="1">
    <location>
        <begin position="500"/>
        <end position="515"/>
    </location>
</feature>
<feature type="disulfide bond" evidence="1">
    <location>
        <begin position="517"/>
        <end position="526"/>
    </location>
</feature>
<feature type="disulfide bond" evidence="3">
    <location>
        <begin position="544"/>
        <end position="567"/>
    </location>
</feature>
<feature type="disulfide bond" evidence="3">
    <location>
        <begin position="561"/>
        <end position="577"/>
    </location>
</feature>
<feature type="disulfide bond" evidence="1">
    <location>
        <begin position="579"/>
        <end position="588"/>
    </location>
</feature>
<feature type="disulfide bond" evidence="1">
    <location>
        <begin position="595"/>
        <end position="606"/>
    </location>
</feature>
<feature type="disulfide bond" evidence="1">
    <location>
        <begin position="600"/>
        <end position="615"/>
    </location>
</feature>
<feature type="disulfide bond" evidence="1">
    <location>
        <begin position="617"/>
        <end position="626"/>
    </location>
</feature>
<feature type="disulfide bond" evidence="1">
    <location>
        <begin position="633"/>
        <end position="644"/>
    </location>
</feature>
<feature type="disulfide bond" evidence="1">
    <location>
        <begin position="638"/>
        <end position="653"/>
    </location>
</feature>
<feature type="disulfide bond" evidence="1">
    <location>
        <begin position="655"/>
        <end position="664"/>
    </location>
</feature>
<feature type="disulfide bond" evidence="1">
    <location>
        <begin position="671"/>
        <end position="682"/>
    </location>
</feature>
<feature type="disulfide bond" evidence="1">
    <location>
        <begin position="676"/>
        <end position="691"/>
    </location>
</feature>
<feature type="disulfide bond" evidence="1">
    <location>
        <begin position="693"/>
        <end position="702"/>
    </location>
</feature>
<feature type="disulfide bond" evidence="1">
    <location>
        <begin position="710"/>
        <end position="721"/>
    </location>
</feature>
<feature type="disulfide bond" evidence="1">
    <location>
        <begin position="715"/>
        <end position="730"/>
    </location>
</feature>
<feature type="disulfide bond" evidence="1">
    <location>
        <begin position="732"/>
        <end position="741"/>
    </location>
</feature>
<feature type="disulfide bond" evidence="1">
    <location>
        <begin position="748"/>
        <end position="759"/>
    </location>
</feature>
<feature type="disulfide bond" evidence="1">
    <location>
        <begin position="753"/>
        <end position="768"/>
    </location>
</feature>
<feature type="disulfide bond" evidence="1">
    <location>
        <begin position="770"/>
        <end position="779"/>
    </location>
</feature>
<feature type="disulfide bond" evidence="1">
    <location>
        <begin position="786"/>
        <end position="797"/>
    </location>
</feature>
<feature type="disulfide bond" evidence="1">
    <location>
        <begin position="791"/>
        <end position="806"/>
    </location>
</feature>
<feature type="disulfide bond" evidence="1">
    <location>
        <begin position="808"/>
        <end position="817"/>
    </location>
</feature>
<feature type="non-terminal residue">
    <location>
        <position position="1"/>
    </location>
</feature>
<dbReference type="EMBL" id="U70050">
    <property type="protein sequence ID" value="AAC52946.1"/>
    <property type="molecule type" value="mRNA"/>
</dbReference>
<dbReference type="SMR" id="P97607"/>
<dbReference type="FunCoup" id="P97607">
    <property type="interactions" value="599"/>
</dbReference>
<dbReference type="STRING" id="10116.ENSRNOP00000019213"/>
<dbReference type="GlyCosmos" id="P97607">
    <property type="glycosylation" value="5 sites, No reported glycans"/>
</dbReference>
<dbReference type="GlyGen" id="P97607">
    <property type="glycosylation" value="6 sites"/>
</dbReference>
<dbReference type="PhosphoSitePlus" id="P97607"/>
<dbReference type="jPOST" id="P97607"/>
<dbReference type="PaxDb" id="10116-ENSRNOP00000019213"/>
<dbReference type="UCSC" id="RGD:2938">
    <property type="organism name" value="rat"/>
</dbReference>
<dbReference type="AGR" id="RGD:2938"/>
<dbReference type="RGD" id="2938">
    <property type="gene designation" value="Jag2"/>
</dbReference>
<dbReference type="eggNOG" id="KOG1217">
    <property type="taxonomic scope" value="Eukaryota"/>
</dbReference>
<dbReference type="InParanoid" id="P97607"/>
<dbReference type="PhylomeDB" id="P97607"/>
<dbReference type="Reactome" id="R-RNO-2979096">
    <property type="pathway name" value="NOTCH2 Activation and Transmission of Signal to the Nucleus"/>
</dbReference>
<dbReference type="Reactome" id="R-RNO-9013507">
    <property type="pathway name" value="NOTCH3 Activation and Transmission of Signal to the Nucleus"/>
</dbReference>
<dbReference type="Proteomes" id="UP000002494">
    <property type="component" value="Unplaced"/>
</dbReference>
<dbReference type="GO" id="GO:0016020">
    <property type="term" value="C:membrane"/>
    <property type="evidence" value="ECO:0000266"/>
    <property type="project" value="RGD"/>
</dbReference>
<dbReference type="GO" id="GO:0048471">
    <property type="term" value="C:perinuclear region of cytoplasm"/>
    <property type="evidence" value="ECO:0000314"/>
    <property type="project" value="RGD"/>
</dbReference>
<dbReference type="GO" id="GO:0005886">
    <property type="term" value="C:plasma membrane"/>
    <property type="evidence" value="ECO:0000250"/>
    <property type="project" value="UniProtKB"/>
</dbReference>
<dbReference type="GO" id="GO:0005509">
    <property type="term" value="F:calcium ion binding"/>
    <property type="evidence" value="ECO:0007669"/>
    <property type="project" value="InterPro"/>
</dbReference>
<dbReference type="GO" id="GO:0008083">
    <property type="term" value="F:growth factor activity"/>
    <property type="evidence" value="ECO:0000250"/>
    <property type="project" value="UniProtKB"/>
</dbReference>
<dbReference type="GO" id="GO:0005112">
    <property type="term" value="F:Notch binding"/>
    <property type="evidence" value="ECO:0000266"/>
    <property type="project" value="RGD"/>
</dbReference>
<dbReference type="GO" id="GO:0009912">
    <property type="term" value="P:auditory receptor cell fate commitment"/>
    <property type="evidence" value="ECO:0000250"/>
    <property type="project" value="UniProtKB"/>
</dbReference>
<dbReference type="GO" id="GO:0030154">
    <property type="term" value="P:cell differentiation"/>
    <property type="evidence" value="ECO:0000266"/>
    <property type="project" value="RGD"/>
</dbReference>
<dbReference type="GO" id="GO:0001709">
    <property type="term" value="P:cell fate determination"/>
    <property type="evidence" value="ECO:0000303"/>
    <property type="project" value="UniProtKB"/>
</dbReference>
<dbReference type="GO" id="GO:0030326">
    <property type="term" value="P:embryonic limb morphogenesis"/>
    <property type="evidence" value="ECO:0000303"/>
    <property type="project" value="UniProtKB"/>
</dbReference>
<dbReference type="GO" id="GO:1990134">
    <property type="term" value="P:epithelial cell apoptotic process involved in palatal shelf morphogenesis"/>
    <property type="evidence" value="ECO:0000266"/>
    <property type="project" value="RGD"/>
</dbReference>
<dbReference type="GO" id="GO:0042492">
    <property type="term" value="P:gamma-delta T cell differentiation"/>
    <property type="evidence" value="ECO:0000266"/>
    <property type="project" value="RGD"/>
</dbReference>
<dbReference type="GO" id="GO:0001701">
    <property type="term" value="P:in utero embryonic development"/>
    <property type="evidence" value="ECO:0000266"/>
    <property type="project" value="RGD"/>
</dbReference>
<dbReference type="GO" id="GO:0008584">
    <property type="term" value="P:male gonad development"/>
    <property type="evidence" value="ECO:0000270"/>
    <property type="project" value="RGD"/>
</dbReference>
<dbReference type="GO" id="GO:0016331">
    <property type="term" value="P:morphogenesis of embryonic epithelium"/>
    <property type="evidence" value="ECO:0000266"/>
    <property type="project" value="RGD"/>
</dbReference>
<dbReference type="GO" id="GO:0007219">
    <property type="term" value="P:Notch signaling pathway"/>
    <property type="evidence" value="ECO:0000303"/>
    <property type="project" value="UniProtKB"/>
</dbReference>
<dbReference type="GO" id="GO:0042475">
    <property type="term" value="P:odontogenesis of dentin-containing tooth"/>
    <property type="evidence" value="ECO:0000266"/>
    <property type="project" value="RGD"/>
</dbReference>
<dbReference type="GO" id="GO:0045747">
    <property type="term" value="P:positive regulation of Notch signaling pathway"/>
    <property type="evidence" value="ECO:0000250"/>
    <property type="project" value="UniProtKB"/>
</dbReference>
<dbReference type="GO" id="GO:0030155">
    <property type="term" value="P:regulation of cell adhesion"/>
    <property type="evidence" value="ECO:0000266"/>
    <property type="project" value="RGD"/>
</dbReference>
<dbReference type="GO" id="GO:0042127">
    <property type="term" value="P:regulation of cell population proliferation"/>
    <property type="evidence" value="ECO:0000250"/>
    <property type="project" value="UniProtKB"/>
</dbReference>
<dbReference type="GO" id="GO:0003016">
    <property type="term" value="P:respiratory system process"/>
    <property type="evidence" value="ECO:0000266"/>
    <property type="project" value="RGD"/>
</dbReference>
<dbReference type="GO" id="GO:0001666">
    <property type="term" value="P:response to hypoxia"/>
    <property type="evidence" value="ECO:0000270"/>
    <property type="project" value="RGD"/>
</dbReference>
<dbReference type="GO" id="GO:0001501">
    <property type="term" value="P:skeletal system development"/>
    <property type="evidence" value="ECO:0000266"/>
    <property type="project" value="RGD"/>
</dbReference>
<dbReference type="GO" id="GO:0007283">
    <property type="term" value="P:spermatogenesis"/>
    <property type="evidence" value="ECO:0000315"/>
    <property type="project" value="RGD"/>
</dbReference>
<dbReference type="GO" id="GO:0030217">
    <property type="term" value="P:T cell differentiation"/>
    <property type="evidence" value="ECO:0000250"/>
    <property type="project" value="UniProtKB"/>
</dbReference>
<dbReference type="GO" id="GO:0045061">
    <property type="term" value="P:thymic T cell selection"/>
    <property type="evidence" value="ECO:0000250"/>
    <property type="project" value="UniProtKB"/>
</dbReference>
<dbReference type="GO" id="GO:0042060">
    <property type="term" value="P:wound healing"/>
    <property type="evidence" value="ECO:0000270"/>
    <property type="project" value="UniProtKB"/>
</dbReference>
<dbReference type="CDD" id="cd00054">
    <property type="entry name" value="EGF_CA"/>
    <property type="match status" value="14"/>
</dbReference>
<dbReference type="FunFam" id="2.10.25.10:FF:000018">
    <property type="entry name" value="Delta-like 1"/>
    <property type="match status" value="1"/>
</dbReference>
<dbReference type="FunFam" id="2.10.25.10:FF:000007">
    <property type="entry name" value="Delta-like protein"/>
    <property type="match status" value="1"/>
</dbReference>
<dbReference type="FunFam" id="2.10.25.10:FF:000061">
    <property type="entry name" value="Delta-like protein"/>
    <property type="match status" value="2"/>
</dbReference>
<dbReference type="FunFam" id="2.10.25.10:FF:000117">
    <property type="entry name" value="Delta-like protein"/>
    <property type="match status" value="1"/>
</dbReference>
<dbReference type="FunFam" id="2.10.25.10:FF:000148">
    <property type="entry name" value="Delta-like protein"/>
    <property type="match status" value="1"/>
</dbReference>
<dbReference type="FunFam" id="2.10.25.10:FF:000310">
    <property type="entry name" value="Delta-like protein"/>
    <property type="match status" value="1"/>
</dbReference>
<dbReference type="FunFam" id="2.10.25.10:FF:000431">
    <property type="entry name" value="Delta-like protein"/>
    <property type="match status" value="1"/>
</dbReference>
<dbReference type="FunFam" id="2.10.25.10:FF:000445">
    <property type="entry name" value="Delta-like protein"/>
    <property type="match status" value="1"/>
</dbReference>
<dbReference type="FunFam" id="2.10.25.10:FF:000473">
    <property type="entry name" value="Delta-like protein"/>
    <property type="match status" value="1"/>
</dbReference>
<dbReference type="FunFam" id="2.10.25.10:FF:000824">
    <property type="entry name" value="Delta-like protein"/>
    <property type="match status" value="1"/>
</dbReference>
<dbReference type="FunFam" id="2.10.25.140:FF:000001">
    <property type="entry name" value="Delta-like protein"/>
    <property type="match status" value="1"/>
</dbReference>
<dbReference type="FunFam" id="2.60.40.3510:FF:000006">
    <property type="entry name" value="Delta-like protein"/>
    <property type="match status" value="1"/>
</dbReference>
<dbReference type="FunFam" id="2.10.25.10:FF:000095">
    <property type="entry name" value="Notch, isoform B"/>
    <property type="match status" value="1"/>
</dbReference>
<dbReference type="FunFam" id="2.10.25.10:FF:000143">
    <property type="entry name" value="Protein crumbs 1"/>
    <property type="match status" value="1"/>
</dbReference>
<dbReference type="FunFam" id="2.10.25.10:FF:000146">
    <property type="entry name" value="Putative neurogenic locus notch"/>
    <property type="match status" value="1"/>
</dbReference>
<dbReference type="FunFam" id="2.10.25.10:FF:000006">
    <property type="entry name" value="Versican core protein-like isoform 1"/>
    <property type="match status" value="1"/>
</dbReference>
<dbReference type="Gene3D" id="2.10.25.140">
    <property type="match status" value="1"/>
</dbReference>
<dbReference type="Gene3D" id="2.60.40.3510">
    <property type="match status" value="1"/>
</dbReference>
<dbReference type="Gene3D" id="2.10.25.10">
    <property type="entry name" value="Laminin"/>
    <property type="match status" value="15"/>
</dbReference>
<dbReference type="InterPro" id="IPR001774">
    <property type="entry name" value="DSL"/>
</dbReference>
<dbReference type="InterPro" id="IPR001881">
    <property type="entry name" value="EGF-like_Ca-bd_dom"/>
</dbReference>
<dbReference type="InterPro" id="IPR013032">
    <property type="entry name" value="EGF-like_CS"/>
</dbReference>
<dbReference type="InterPro" id="IPR000742">
    <property type="entry name" value="EGF-like_dom"/>
</dbReference>
<dbReference type="InterPro" id="IPR000152">
    <property type="entry name" value="EGF-type_Asp/Asn_hydroxyl_site"/>
</dbReference>
<dbReference type="InterPro" id="IPR018097">
    <property type="entry name" value="EGF_Ca-bd_CS"/>
</dbReference>
<dbReference type="InterPro" id="IPR009030">
    <property type="entry name" value="Growth_fac_rcpt_cys_sf"/>
</dbReference>
<dbReference type="InterPro" id="IPR056986">
    <property type="entry name" value="JAG1_1/2_dom"/>
</dbReference>
<dbReference type="InterPro" id="IPR026219">
    <property type="entry name" value="Jagged/Serrate"/>
</dbReference>
<dbReference type="InterPro" id="IPR049883">
    <property type="entry name" value="NOTCH1_EGF-like"/>
</dbReference>
<dbReference type="InterPro" id="IPR011651">
    <property type="entry name" value="Notch_ligand_N"/>
</dbReference>
<dbReference type="InterPro" id="IPR001007">
    <property type="entry name" value="VWF_dom"/>
</dbReference>
<dbReference type="PANTHER" id="PTHR12916">
    <property type="entry name" value="CYTOCHROME C OXIDASE POLYPEPTIDE VIC-2"/>
    <property type="match status" value="1"/>
</dbReference>
<dbReference type="PANTHER" id="PTHR12916:SF12">
    <property type="entry name" value="DELTA-LIKE PROTEIN"/>
    <property type="match status" value="1"/>
</dbReference>
<dbReference type="Pfam" id="PF01414">
    <property type="entry name" value="DSL"/>
    <property type="match status" value="1"/>
</dbReference>
<dbReference type="Pfam" id="PF00008">
    <property type="entry name" value="EGF"/>
    <property type="match status" value="8"/>
</dbReference>
<dbReference type="Pfam" id="PF07645">
    <property type="entry name" value="EGF_CA"/>
    <property type="match status" value="1"/>
</dbReference>
<dbReference type="Pfam" id="PF21700">
    <property type="entry name" value="EGF_DL_JAG"/>
    <property type="match status" value="1"/>
</dbReference>
<dbReference type="Pfam" id="PF12661">
    <property type="entry name" value="hEGF"/>
    <property type="match status" value="4"/>
</dbReference>
<dbReference type="Pfam" id="PF23575">
    <property type="entry name" value="JAG1"/>
    <property type="match status" value="1"/>
</dbReference>
<dbReference type="Pfam" id="PF07657">
    <property type="entry name" value="MNNL"/>
    <property type="match status" value="1"/>
</dbReference>
<dbReference type="PRINTS" id="PR00010">
    <property type="entry name" value="EGFBLOOD"/>
</dbReference>
<dbReference type="PRINTS" id="PR02059">
    <property type="entry name" value="JAGGEDFAMILY"/>
</dbReference>
<dbReference type="SMART" id="SM00051">
    <property type="entry name" value="DSL"/>
    <property type="match status" value="1"/>
</dbReference>
<dbReference type="SMART" id="SM00181">
    <property type="entry name" value="EGF"/>
    <property type="match status" value="16"/>
</dbReference>
<dbReference type="SMART" id="SM00179">
    <property type="entry name" value="EGF_CA"/>
    <property type="match status" value="14"/>
</dbReference>
<dbReference type="SMART" id="SM00215">
    <property type="entry name" value="VWC_out"/>
    <property type="match status" value="1"/>
</dbReference>
<dbReference type="SUPFAM" id="SSF57196">
    <property type="entry name" value="EGF/Laminin"/>
    <property type="match status" value="6"/>
</dbReference>
<dbReference type="SUPFAM" id="SSF57184">
    <property type="entry name" value="Growth factor receptor domain"/>
    <property type="match status" value="2"/>
</dbReference>
<dbReference type="PROSITE" id="PS00010">
    <property type="entry name" value="ASX_HYDROXYL"/>
    <property type="match status" value="10"/>
</dbReference>
<dbReference type="PROSITE" id="PS51051">
    <property type="entry name" value="DSL"/>
    <property type="match status" value="1"/>
</dbReference>
<dbReference type="PROSITE" id="PS00022">
    <property type="entry name" value="EGF_1"/>
    <property type="match status" value="15"/>
</dbReference>
<dbReference type="PROSITE" id="PS01186">
    <property type="entry name" value="EGF_2"/>
    <property type="match status" value="11"/>
</dbReference>
<dbReference type="PROSITE" id="PS50026">
    <property type="entry name" value="EGF_3"/>
    <property type="match status" value="15"/>
</dbReference>
<dbReference type="PROSITE" id="PS01187">
    <property type="entry name" value="EGF_CA"/>
    <property type="match status" value="7"/>
</dbReference>
<reference key="1">
    <citation type="journal article" date="1996" name="Dev. Biol.">
        <title>Jagged2: a serrate-like gene expressed during rat embryogenesis.</title>
        <authorList>
            <person name="Shawber C."/>
            <person name="Boulter J."/>
            <person name="Lindsell C.E."/>
            <person name="Weinmaster G."/>
        </authorList>
    </citation>
    <scope>NUCLEOTIDE SEQUENCE [MRNA]</scope>
    <source>
        <tissue>Brain</tissue>
    </source>
</reference>
<proteinExistence type="evidence at transcript level"/>
<accession>P97607</accession>
<sequence length="1202" mass="129705">GACCDGDGRTTRAGGCGRDECDTYVRVCLKEYQAKVTPTGPCSYGYGATPVLGSNSFYLPPAGAAGDRARARSRTGGHQDPGLVVIPFQFAWPRSFTLIVEAWDWDNDTTPDEELLIERVSHAGMINPEDRWKSLHFSGHVAHLELQIRVRCDENYYSATCNKFCRPRNDFFGHYTCDQYGNKACMDGWMGKECKEAVCKQGCNLLHGGCTVPGECRCSYGWQGKFCDECVPYPGCVHGSCVEPWHCDCETNWGGLLCDKDLNYCGSHHPCVNGGTCINAEPDQYLCACPDGYLGKNCERAEHACASNPCANGGSCHEVLSGFECHCPSGWSGPTCALDIDECASNPCAAGGTCVDQVDGFECICPEQWVGATCQLDANECEGKPCLNAFSCKNLIGGYYCDCLPGWKGANCHININDCHGQCQHGGTCKDLVNGYQCVCPRGFGGRHCELEYYKCASSPCRRGGICEDLVDGFRCHCPRGLSGPLCEVDVDLWCEPNPCLNGARCYNLEDDYYCACPEDFGGKNCSVPRETCPGGACRVIDGCGFEAGSRAHGAAPSGVCGPHGHCVSLPGGNFSCICDSGFTGTYCHENIDDCMGQPCRNGGTCIDEVDSFACFCPSGWEGELCDINPNDCLPDPCHSRGRCYDLVNDFYCVCDDGWKDKTCHSREFQCDAYTCSNGGTCYDSGDTFRCACPPGWKGSTCTIAKNSSCVPNPCVNGGTCVGSGDSFSCICRDGWEGRTCTHNTNDCNPLPCYNGGICVDGVNWFRCECAPGFAGPDCRINIDECQSSPCAYGATCVDEINGYRCSCPPGRSGPRCQEVVIFTRPCWSRGVSFPHGSSWVEDCNSCRCLDGHRDCSKVWCGWKPCLLSPQPSALSAQCPPGQQCREKAMGQCLQPPCENWGECTAEDPLPPSTPCLPRTTHLDNNCARLTLHFNRDQVPQGTTVGAICSGIRALPATRAAARDRLLLLLCDRASSGASAVEVAVSFSPARDLPDSSLIQSTAHAIVAAITQRGNSSLLLAVTEVKVETVVMGGSSTGLLVPVLCSVFSVLWLACMVICVWWTRKRRKERERSRLPRDESANNQWAPLNPIRNPIERPGSSGLGTGGHKDVLYQCKNFTPPPRRAGEALPGPASHGAGGEDEEDEELSRGDGRLSRSREVPLTQIHQRPQLLPGKASLLAPGPKVDNRAVRSTKDVRCAGRE</sequence>
<gene>
    <name type="primary">Jag2</name>
</gene>
<evidence type="ECO:0000250" key="1"/>
<evidence type="ECO:0000250" key="2">
    <source>
        <dbReference type="UniProtKB" id="Q9Y219"/>
    </source>
</evidence>
<evidence type="ECO:0000255" key="3"/>
<evidence type="ECO:0000255" key="4">
    <source>
        <dbReference type="PROSITE-ProRule" id="PRU00076"/>
    </source>
</evidence>
<evidence type="ECO:0000255" key="5">
    <source>
        <dbReference type="PROSITE-ProRule" id="PRU00377"/>
    </source>
</evidence>
<evidence type="ECO:0000256" key="6">
    <source>
        <dbReference type="SAM" id="MobiDB-lite"/>
    </source>
</evidence>